<feature type="chain" id="PRO_0000428332" description="Protein translocase subunit SecY">
    <location>
        <begin position="1"/>
        <end position="441"/>
    </location>
</feature>
<feature type="transmembrane region" description="Helical" evidence="1">
    <location>
        <begin position="18"/>
        <end position="38"/>
    </location>
</feature>
<feature type="transmembrane region" description="Helical" evidence="1">
    <location>
        <begin position="78"/>
        <end position="98"/>
    </location>
</feature>
<feature type="transmembrane region" description="Helical" evidence="1">
    <location>
        <begin position="124"/>
        <end position="144"/>
    </location>
</feature>
<feature type="transmembrane region" description="Helical" evidence="1">
    <location>
        <begin position="157"/>
        <end position="177"/>
    </location>
</feature>
<feature type="transmembrane region" description="Helical" evidence="1">
    <location>
        <begin position="180"/>
        <end position="200"/>
    </location>
</feature>
<feature type="transmembrane region" description="Helical" evidence="1">
    <location>
        <begin position="215"/>
        <end position="235"/>
    </location>
</feature>
<feature type="transmembrane region" description="Helical" evidence="1">
    <location>
        <begin position="272"/>
        <end position="292"/>
    </location>
</feature>
<feature type="transmembrane region" description="Helical" evidence="1">
    <location>
        <begin position="318"/>
        <end position="338"/>
    </location>
</feature>
<feature type="transmembrane region" description="Helical" evidence="1">
    <location>
        <begin position="382"/>
        <end position="402"/>
    </location>
</feature>
<feature type="transmembrane region" description="Helical" evidence="1">
    <location>
        <begin position="403"/>
        <end position="423"/>
    </location>
</feature>
<name>SECY_MYCTO</name>
<organism>
    <name type="scientific">Mycobacterium tuberculosis (strain CDC 1551 / Oshkosh)</name>
    <dbReference type="NCBI Taxonomy" id="83331"/>
    <lineage>
        <taxon>Bacteria</taxon>
        <taxon>Bacillati</taxon>
        <taxon>Actinomycetota</taxon>
        <taxon>Actinomycetes</taxon>
        <taxon>Mycobacteriales</taxon>
        <taxon>Mycobacteriaceae</taxon>
        <taxon>Mycobacterium</taxon>
        <taxon>Mycobacterium tuberculosis complex</taxon>
    </lineage>
</organism>
<comment type="function">
    <text evidence="1">The central subunit of the protein translocation channel SecYEG. Consists of two halves formed by TMs 1-5 and 6-10. These two domains form a lateral gate at the front which open onto the bilayer between TMs 2 and 7, and are clamped together by SecE at the back. The channel is closed by both a pore ring composed of hydrophobic SecY resides and a short helix (helix 2A) on the extracellular side of the membrane which forms a plug. The plug probably moves laterally to allow the channel to open. The ring and the pore may move independently.</text>
</comment>
<comment type="subunit">
    <text evidence="1">Component of the Sec protein translocase complex. Heterotrimer consisting of SecY, SecE and SecG subunits. The heterotrimers can form oligomers, although 1 heterotrimer is thought to be able to translocate proteins. Interacts with the ribosome. Interacts with SecDF, and other proteins may be involved. Interacts with SecA.</text>
</comment>
<comment type="subcellular location">
    <subcellularLocation>
        <location evidence="1">Cell membrane</location>
        <topology evidence="1">Multi-pass membrane protein</topology>
    </subcellularLocation>
</comment>
<comment type="similarity">
    <text evidence="1">Belongs to the SecY/SEC61-alpha family.</text>
</comment>
<dbReference type="EMBL" id="AE000516">
    <property type="protein sequence ID" value="AAK44990.1"/>
    <property type="molecule type" value="Genomic_DNA"/>
</dbReference>
<dbReference type="PIR" id="G70822">
    <property type="entry name" value="G70822"/>
</dbReference>
<dbReference type="RefSeq" id="WP_003403723.1">
    <property type="nucleotide sequence ID" value="NZ_KK341227.1"/>
</dbReference>
<dbReference type="SMR" id="P9WGN2"/>
<dbReference type="GeneID" id="45424697"/>
<dbReference type="KEGG" id="mtc:MT0756.1"/>
<dbReference type="PATRIC" id="fig|83331.31.peg.810"/>
<dbReference type="HOGENOM" id="CLU_030313_0_0_11"/>
<dbReference type="Proteomes" id="UP000001020">
    <property type="component" value="Chromosome"/>
</dbReference>
<dbReference type="GO" id="GO:0005886">
    <property type="term" value="C:plasma membrane"/>
    <property type="evidence" value="ECO:0007669"/>
    <property type="project" value="UniProtKB-SubCell"/>
</dbReference>
<dbReference type="GO" id="GO:0065002">
    <property type="term" value="P:intracellular protein transmembrane transport"/>
    <property type="evidence" value="ECO:0007669"/>
    <property type="project" value="UniProtKB-UniRule"/>
</dbReference>
<dbReference type="GO" id="GO:0006605">
    <property type="term" value="P:protein targeting"/>
    <property type="evidence" value="ECO:0007669"/>
    <property type="project" value="UniProtKB-UniRule"/>
</dbReference>
<dbReference type="GO" id="GO:0043952">
    <property type="term" value="P:protein transport by the Sec complex"/>
    <property type="evidence" value="ECO:0007669"/>
    <property type="project" value="UniProtKB-UniRule"/>
</dbReference>
<dbReference type="FunFam" id="1.10.3370.10:FF:000001">
    <property type="entry name" value="Preprotein translocase subunit SecY"/>
    <property type="match status" value="1"/>
</dbReference>
<dbReference type="Gene3D" id="1.10.3370.10">
    <property type="entry name" value="SecY subunit domain"/>
    <property type="match status" value="1"/>
</dbReference>
<dbReference type="HAMAP" id="MF_01465">
    <property type="entry name" value="SecY"/>
    <property type="match status" value="1"/>
</dbReference>
<dbReference type="InterPro" id="IPR026593">
    <property type="entry name" value="SecY"/>
</dbReference>
<dbReference type="InterPro" id="IPR002208">
    <property type="entry name" value="SecY/SEC61-alpha"/>
</dbReference>
<dbReference type="InterPro" id="IPR030659">
    <property type="entry name" value="SecY_CS"/>
</dbReference>
<dbReference type="InterPro" id="IPR023201">
    <property type="entry name" value="SecY_dom_sf"/>
</dbReference>
<dbReference type="NCBIfam" id="TIGR00967">
    <property type="entry name" value="3a0501s007"/>
    <property type="match status" value="1"/>
</dbReference>
<dbReference type="PANTHER" id="PTHR10906">
    <property type="entry name" value="SECY/SEC61-ALPHA FAMILY MEMBER"/>
    <property type="match status" value="1"/>
</dbReference>
<dbReference type="Pfam" id="PF00344">
    <property type="entry name" value="SecY"/>
    <property type="match status" value="1"/>
</dbReference>
<dbReference type="PIRSF" id="PIRSF004557">
    <property type="entry name" value="SecY"/>
    <property type="match status" value="1"/>
</dbReference>
<dbReference type="PRINTS" id="PR00303">
    <property type="entry name" value="SECYTRNLCASE"/>
</dbReference>
<dbReference type="SUPFAM" id="SSF103491">
    <property type="entry name" value="Preprotein translocase SecY subunit"/>
    <property type="match status" value="1"/>
</dbReference>
<dbReference type="PROSITE" id="PS00755">
    <property type="entry name" value="SECY_1"/>
    <property type="match status" value="1"/>
</dbReference>
<dbReference type="PROSITE" id="PS00756">
    <property type="entry name" value="SECY_2"/>
    <property type="match status" value="1"/>
</dbReference>
<protein>
    <recommendedName>
        <fullName evidence="1">Protein translocase subunit SecY</fullName>
    </recommendedName>
</protein>
<reference key="1">
    <citation type="journal article" date="2002" name="J. Bacteriol.">
        <title>Whole-genome comparison of Mycobacterium tuberculosis clinical and laboratory strains.</title>
        <authorList>
            <person name="Fleischmann R.D."/>
            <person name="Alland D."/>
            <person name="Eisen J.A."/>
            <person name="Carpenter L."/>
            <person name="White O."/>
            <person name="Peterson J.D."/>
            <person name="DeBoy R.T."/>
            <person name="Dodson R.J."/>
            <person name="Gwinn M.L."/>
            <person name="Haft D.H."/>
            <person name="Hickey E.K."/>
            <person name="Kolonay J.F."/>
            <person name="Nelson W.C."/>
            <person name="Umayam L.A."/>
            <person name="Ermolaeva M.D."/>
            <person name="Salzberg S.L."/>
            <person name="Delcher A."/>
            <person name="Utterback T.R."/>
            <person name="Weidman J.F."/>
            <person name="Khouri H.M."/>
            <person name="Gill J."/>
            <person name="Mikula A."/>
            <person name="Bishai W."/>
            <person name="Jacobs W.R. Jr."/>
            <person name="Venter J.C."/>
            <person name="Fraser C.M."/>
        </authorList>
    </citation>
    <scope>NUCLEOTIDE SEQUENCE [LARGE SCALE GENOMIC DNA]</scope>
    <source>
        <strain>CDC 1551 / Oshkosh</strain>
    </source>
</reference>
<accession>P9WGN2</accession>
<accession>L0T7J9</accession>
<accession>P0A5Z2</accession>
<accession>P94926</accession>
<evidence type="ECO:0000255" key="1">
    <source>
        <dbReference type="HAMAP-Rule" id="MF_01465"/>
    </source>
</evidence>
<gene>
    <name evidence="1" type="primary">secY</name>
    <name type="ordered locus">MT0756.1</name>
</gene>
<sequence length="441" mass="47611">MLSAFISSLRTVDLRRKILFTLGIVILYRVGAALPSPGVNFPNVQQCIKEASAGEAGQIYSLINLFSGGALLKLTVFAVGVMPYITASIIVQLLTVVIPRFEELRKEGQAGQSKMTQYTRYLAIALAILQATSIVALAANGGLLQGCSLDIIADQSIFTLVVIVLVMTGGAALVMWMGELITERGIGNGMSLLIFVGIAARIPAEGQSILESRGGVVFTAVCAAALIIIVGVVFVEQGQRRIPVQYAKRMVGRRMYGGTSTYLPLKVNQAGVIPVIFASSLIYIPHLITQLIRSGSGVVGNSWWDKFVGTYLSDPSNLVYIGIYFGLIIFFTYFYVSITFNPDERADEMKKFGGFIPGIRPGRPTADYLRYVLSRITLPGSIYLGVIAVLPNLFLQIGAGGTVQNLPFGGTAVLIMIGVGLDTVKQIESQLMQRNYEGFLK</sequence>
<keyword id="KW-1003">Cell membrane</keyword>
<keyword id="KW-0472">Membrane</keyword>
<keyword id="KW-0653">Protein transport</keyword>
<keyword id="KW-1185">Reference proteome</keyword>
<keyword id="KW-0811">Translocation</keyword>
<keyword id="KW-0812">Transmembrane</keyword>
<keyword id="KW-1133">Transmembrane helix</keyword>
<keyword id="KW-0813">Transport</keyword>
<proteinExistence type="inferred from homology"/>